<dbReference type="EMBL" id="CP000139">
    <property type="protein sequence ID" value="ABR39351.1"/>
    <property type="molecule type" value="Genomic_DNA"/>
</dbReference>
<dbReference type="RefSeq" id="WP_005838658.1">
    <property type="nucleotide sequence ID" value="NZ_JANSWM010000064.1"/>
</dbReference>
<dbReference type="SMR" id="A6L0Y7"/>
<dbReference type="STRING" id="435590.BVU_1670"/>
<dbReference type="PaxDb" id="435590-BVU_1670"/>
<dbReference type="GeneID" id="5302636"/>
<dbReference type="KEGG" id="bvu:BVU_1670"/>
<dbReference type="eggNOG" id="COG0254">
    <property type="taxonomic scope" value="Bacteria"/>
</dbReference>
<dbReference type="HOGENOM" id="CLU_114306_2_2_10"/>
<dbReference type="BioCyc" id="BVUL435590:G1G59-1756-MONOMER"/>
<dbReference type="Proteomes" id="UP000002861">
    <property type="component" value="Chromosome"/>
</dbReference>
<dbReference type="GO" id="GO:1990904">
    <property type="term" value="C:ribonucleoprotein complex"/>
    <property type="evidence" value="ECO:0007669"/>
    <property type="project" value="UniProtKB-KW"/>
</dbReference>
<dbReference type="GO" id="GO:0005840">
    <property type="term" value="C:ribosome"/>
    <property type="evidence" value="ECO:0007669"/>
    <property type="project" value="UniProtKB-KW"/>
</dbReference>
<dbReference type="GO" id="GO:0003735">
    <property type="term" value="F:structural constituent of ribosome"/>
    <property type="evidence" value="ECO:0007669"/>
    <property type="project" value="InterPro"/>
</dbReference>
<dbReference type="GO" id="GO:0006412">
    <property type="term" value="P:translation"/>
    <property type="evidence" value="ECO:0007669"/>
    <property type="project" value="UniProtKB-UniRule"/>
</dbReference>
<dbReference type="Gene3D" id="4.10.830.30">
    <property type="entry name" value="Ribosomal protein L31"/>
    <property type="match status" value="1"/>
</dbReference>
<dbReference type="HAMAP" id="MF_00502">
    <property type="entry name" value="Ribosomal_bL31_2"/>
    <property type="match status" value="1"/>
</dbReference>
<dbReference type="InterPro" id="IPR034704">
    <property type="entry name" value="Ribosomal_bL28/bL31-like_sf"/>
</dbReference>
<dbReference type="InterPro" id="IPR002150">
    <property type="entry name" value="Ribosomal_bL31"/>
</dbReference>
<dbReference type="InterPro" id="IPR027493">
    <property type="entry name" value="Ribosomal_bL31_B"/>
</dbReference>
<dbReference type="InterPro" id="IPR042105">
    <property type="entry name" value="Ribosomal_bL31_sf"/>
</dbReference>
<dbReference type="NCBIfam" id="TIGR00105">
    <property type="entry name" value="L31"/>
    <property type="match status" value="1"/>
</dbReference>
<dbReference type="NCBIfam" id="NF002462">
    <property type="entry name" value="PRK01678.1"/>
    <property type="match status" value="1"/>
</dbReference>
<dbReference type="PANTHER" id="PTHR33280">
    <property type="entry name" value="50S RIBOSOMAL PROTEIN L31, CHLOROPLASTIC"/>
    <property type="match status" value="1"/>
</dbReference>
<dbReference type="PANTHER" id="PTHR33280:SF1">
    <property type="entry name" value="LARGE RIBOSOMAL SUBUNIT PROTEIN BL31C"/>
    <property type="match status" value="1"/>
</dbReference>
<dbReference type="Pfam" id="PF01197">
    <property type="entry name" value="Ribosomal_L31"/>
    <property type="match status" value="1"/>
</dbReference>
<dbReference type="PRINTS" id="PR01249">
    <property type="entry name" value="RIBOSOMALL31"/>
</dbReference>
<dbReference type="SUPFAM" id="SSF143800">
    <property type="entry name" value="L28p-like"/>
    <property type="match status" value="1"/>
</dbReference>
<dbReference type="PROSITE" id="PS01143">
    <property type="entry name" value="RIBOSOMAL_L31"/>
    <property type="match status" value="1"/>
</dbReference>
<sequence>MKKGIHPENYRPVVFKDMSNGDVFLSRSTCSTKETIEFEGETYPLVKLEISNTSHPFYTGKSKLVDTAGRVDKFMSRYGNRMKK</sequence>
<organism>
    <name type="scientific">Phocaeicola vulgatus (strain ATCC 8482 / DSM 1447 / JCM 5826 / CCUG 4940 / NBRC 14291 / NCTC 11154)</name>
    <name type="common">Bacteroides vulgatus</name>
    <dbReference type="NCBI Taxonomy" id="435590"/>
    <lineage>
        <taxon>Bacteria</taxon>
        <taxon>Pseudomonadati</taxon>
        <taxon>Bacteroidota</taxon>
        <taxon>Bacteroidia</taxon>
        <taxon>Bacteroidales</taxon>
        <taxon>Bacteroidaceae</taxon>
        <taxon>Phocaeicola</taxon>
    </lineage>
</organism>
<proteinExistence type="inferred from homology"/>
<comment type="subunit">
    <text evidence="1">Part of the 50S ribosomal subunit.</text>
</comment>
<comment type="similarity">
    <text evidence="1">Belongs to the bacterial ribosomal protein bL31 family. Type B subfamily.</text>
</comment>
<accession>A6L0Y7</accession>
<evidence type="ECO:0000255" key="1">
    <source>
        <dbReference type="HAMAP-Rule" id="MF_00502"/>
    </source>
</evidence>
<evidence type="ECO:0000305" key="2"/>
<protein>
    <recommendedName>
        <fullName evidence="1">Large ribosomal subunit protein bL31B</fullName>
    </recommendedName>
    <alternativeName>
        <fullName evidence="2">50S ribosomal protein L31 type B</fullName>
    </alternativeName>
</protein>
<feature type="chain" id="PRO_1000014684" description="Large ribosomal subunit protein bL31B">
    <location>
        <begin position="1"/>
        <end position="84"/>
    </location>
</feature>
<gene>
    <name evidence="1" type="primary">rpmE2</name>
    <name type="ordered locus">BVU_1670</name>
</gene>
<keyword id="KW-0687">Ribonucleoprotein</keyword>
<keyword id="KW-0689">Ribosomal protein</keyword>
<name>RL31B_PHOV8</name>
<reference key="1">
    <citation type="journal article" date="2007" name="PLoS Biol.">
        <title>Evolution of symbiotic bacteria in the distal human intestine.</title>
        <authorList>
            <person name="Xu J."/>
            <person name="Mahowald M.A."/>
            <person name="Ley R.E."/>
            <person name="Lozupone C.A."/>
            <person name="Hamady M."/>
            <person name="Martens E.C."/>
            <person name="Henrissat B."/>
            <person name="Coutinho P.M."/>
            <person name="Minx P."/>
            <person name="Latreille P."/>
            <person name="Cordum H."/>
            <person name="Van Brunt A."/>
            <person name="Kim K."/>
            <person name="Fulton R.S."/>
            <person name="Fulton L.A."/>
            <person name="Clifton S.W."/>
            <person name="Wilson R.K."/>
            <person name="Knight R.D."/>
            <person name="Gordon J.I."/>
        </authorList>
    </citation>
    <scope>NUCLEOTIDE SEQUENCE [LARGE SCALE GENOMIC DNA]</scope>
    <source>
        <strain>ATCC 8482 / DSM 1447 / JCM 5826 / CCUG 4940 / NBRC 14291 / NCTC 11154</strain>
    </source>
</reference>